<protein>
    <recommendedName>
        <fullName>Barrier-to-autointegration factor</fullName>
    </recommendedName>
</protein>
<feature type="chain" id="PRO_0000223613" description="Barrier-to-autointegration factor">
    <location>
        <begin position="1"/>
        <end position="90"/>
    </location>
</feature>
<feature type="modified residue" description="Phosphoserine" evidence="2">
    <location>
        <position position="2"/>
    </location>
</feature>
<feature type="modified residue" description="Phosphoserine" evidence="2">
    <location>
        <position position="3"/>
    </location>
</feature>
<feature type="modified residue" description="Phosphothreonine" evidence="2">
    <location>
        <position position="4"/>
    </location>
</feature>
<feature type="modified residue" description="Phosphoserine" evidence="2">
    <location>
        <position position="5"/>
    </location>
</feature>
<accession>Q6P026</accession>
<dbReference type="EMBL" id="BC065864">
    <property type="protein sequence ID" value="AAH65864.1"/>
    <property type="molecule type" value="mRNA"/>
</dbReference>
<dbReference type="RefSeq" id="NP_991125.1">
    <property type="nucleotide sequence ID" value="NM_205562.1"/>
</dbReference>
<dbReference type="RefSeq" id="XP_017208240.1">
    <property type="nucleotide sequence ID" value="XM_017352751.1"/>
</dbReference>
<dbReference type="RefSeq" id="XP_017208241.1">
    <property type="nucleotide sequence ID" value="XM_017352752.1"/>
</dbReference>
<dbReference type="SMR" id="Q6P026"/>
<dbReference type="FunCoup" id="Q6P026">
    <property type="interactions" value="3396"/>
</dbReference>
<dbReference type="STRING" id="7955.ENSDARP00000053793"/>
<dbReference type="iPTMnet" id="Q6P026"/>
<dbReference type="PaxDb" id="7955-ENSDARP00000053793"/>
<dbReference type="Ensembl" id="ENSDART00000053794">
    <property type="protein sequence ID" value="ENSDARP00000053793"/>
    <property type="gene ID" value="ENSDARG00000037009"/>
</dbReference>
<dbReference type="GeneID" id="334717"/>
<dbReference type="KEGG" id="dre:334717"/>
<dbReference type="AGR" id="ZFIN:ZDB-GENE-030131-6657"/>
<dbReference type="CTD" id="8815"/>
<dbReference type="ZFIN" id="ZDB-GENE-030131-6657">
    <property type="gene designation" value="banf1"/>
</dbReference>
<dbReference type="eggNOG" id="KOG4233">
    <property type="taxonomic scope" value="Eukaryota"/>
</dbReference>
<dbReference type="HOGENOM" id="CLU_167806_0_0_1"/>
<dbReference type="InParanoid" id="Q6P026"/>
<dbReference type="OMA" id="SKQQGDC"/>
<dbReference type="OrthoDB" id="9997163at2759"/>
<dbReference type="PhylomeDB" id="Q6P026"/>
<dbReference type="TreeFam" id="TF315060"/>
<dbReference type="Reactome" id="R-DRE-2995383">
    <property type="pathway name" value="Initiation of Nuclear Envelope (NE) Reformation"/>
</dbReference>
<dbReference type="PRO" id="PR:Q6P026"/>
<dbReference type="Proteomes" id="UP000000437">
    <property type="component" value="Chromosome 21"/>
</dbReference>
<dbReference type="Bgee" id="ENSDARG00000037009">
    <property type="expression patterns" value="Expressed in blastula and 20 other cell types or tissues"/>
</dbReference>
<dbReference type="GO" id="GO:0000785">
    <property type="term" value="C:chromatin"/>
    <property type="evidence" value="ECO:0000250"/>
    <property type="project" value="UniProtKB"/>
</dbReference>
<dbReference type="GO" id="GO:0000793">
    <property type="term" value="C:condensed chromosome"/>
    <property type="evidence" value="ECO:0000318"/>
    <property type="project" value="GO_Central"/>
</dbReference>
<dbReference type="GO" id="GO:0005737">
    <property type="term" value="C:cytoplasm"/>
    <property type="evidence" value="ECO:0007669"/>
    <property type="project" value="UniProtKB-SubCell"/>
</dbReference>
<dbReference type="GO" id="GO:0005635">
    <property type="term" value="C:nuclear envelope"/>
    <property type="evidence" value="ECO:0007669"/>
    <property type="project" value="UniProtKB-SubCell"/>
</dbReference>
<dbReference type="GO" id="GO:0005634">
    <property type="term" value="C:nucleus"/>
    <property type="evidence" value="ECO:0000318"/>
    <property type="project" value="GO_Central"/>
</dbReference>
<dbReference type="GO" id="GO:0003677">
    <property type="term" value="F:DNA binding"/>
    <property type="evidence" value="ECO:0000318"/>
    <property type="project" value="GO_Central"/>
</dbReference>
<dbReference type="GO" id="GO:0006325">
    <property type="term" value="P:chromatin organization"/>
    <property type="evidence" value="ECO:0000250"/>
    <property type="project" value="UniProtKB"/>
</dbReference>
<dbReference type="GO" id="GO:0051276">
    <property type="term" value="P:chromosome organization"/>
    <property type="evidence" value="ECO:0000318"/>
    <property type="project" value="GO_Central"/>
</dbReference>
<dbReference type="GO" id="GO:0007084">
    <property type="term" value="P:mitotic nuclear membrane reassembly"/>
    <property type="evidence" value="ECO:0000250"/>
    <property type="project" value="UniProtKB"/>
</dbReference>
<dbReference type="GO" id="GO:0010836">
    <property type="term" value="P:negative regulation of protein ADP-ribosylation"/>
    <property type="evidence" value="ECO:0000250"/>
    <property type="project" value="UniProtKB"/>
</dbReference>
<dbReference type="GO" id="GO:0032480">
    <property type="term" value="P:negative regulation of type I interferon production"/>
    <property type="evidence" value="ECO:0000250"/>
    <property type="project" value="UniProtKB"/>
</dbReference>
<dbReference type="GO" id="GO:0006979">
    <property type="term" value="P:response to oxidative stress"/>
    <property type="evidence" value="ECO:0000250"/>
    <property type="project" value="UniProtKB"/>
</dbReference>
<dbReference type="FunFam" id="1.10.150.40:FF:000001">
    <property type="entry name" value="Barrier-to-autointegration factor B"/>
    <property type="match status" value="1"/>
</dbReference>
<dbReference type="Gene3D" id="1.10.150.40">
    <property type="entry name" value="Barrier-to-autointegration factor, BAF"/>
    <property type="match status" value="1"/>
</dbReference>
<dbReference type="InterPro" id="IPR051387">
    <property type="entry name" value="BAF"/>
</dbReference>
<dbReference type="InterPro" id="IPR004122">
    <property type="entry name" value="BAF_prot"/>
</dbReference>
<dbReference type="InterPro" id="IPR036617">
    <property type="entry name" value="BAF_sf"/>
</dbReference>
<dbReference type="PANTHER" id="PTHR47507">
    <property type="entry name" value="BARRIER TO AUTOINTEGRATION FACTOR 2"/>
    <property type="match status" value="1"/>
</dbReference>
<dbReference type="PANTHER" id="PTHR47507:SF5">
    <property type="entry name" value="BARRIER-TO-AUTOINTEGRATION FACTOR"/>
    <property type="match status" value="1"/>
</dbReference>
<dbReference type="Pfam" id="PF02961">
    <property type="entry name" value="SAM_BAF"/>
    <property type="match status" value="1"/>
</dbReference>
<dbReference type="SMART" id="SM01023">
    <property type="entry name" value="BAF"/>
    <property type="match status" value="1"/>
</dbReference>
<dbReference type="SUPFAM" id="SSF47798">
    <property type="entry name" value="Barrier-to-autointegration factor, BAF"/>
    <property type="match status" value="1"/>
</dbReference>
<keyword id="KW-0158">Chromosome</keyword>
<keyword id="KW-0963">Cytoplasm</keyword>
<keyword id="KW-0238">DNA-binding</keyword>
<keyword id="KW-0539">Nucleus</keyword>
<keyword id="KW-0597">Phosphoprotein</keyword>
<keyword id="KW-1185">Reference proteome</keyword>
<reference key="1">
    <citation type="submission" date="2004-01" db="EMBL/GenBank/DDBJ databases">
        <authorList>
            <consortium name="NIH - Zebrafish Gene Collection (ZGC) project"/>
        </authorList>
    </citation>
    <scope>NUCLEOTIDE SEQUENCE [LARGE SCALE MRNA]</scope>
</reference>
<reference key="2">
    <citation type="journal article" date="2008" name="J. Proteome Res.">
        <title>Online automated in vivo zebrafish phosphoproteomics: from large-scale analysis down to a single embryo.</title>
        <authorList>
            <person name="Lemeer S."/>
            <person name="Pinkse M.W.H."/>
            <person name="Mohammed S."/>
            <person name="van Breukelen B."/>
            <person name="den Hertog J."/>
            <person name="Slijper M."/>
            <person name="Heck A.J.R."/>
        </authorList>
    </citation>
    <scope>PHOSPHORYLATION [LARGE SCALE ANALYSIS] AT SER-2; SER-3; THR-4 AND SER-5</scope>
    <scope>IDENTIFICATION BY MASS SPECTROMETRY</scope>
    <source>
        <tissue>Embryo</tissue>
    </source>
</reference>
<organism>
    <name type="scientific">Danio rerio</name>
    <name type="common">Zebrafish</name>
    <name type="synonym">Brachydanio rerio</name>
    <dbReference type="NCBI Taxonomy" id="7955"/>
    <lineage>
        <taxon>Eukaryota</taxon>
        <taxon>Metazoa</taxon>
        <taxon>Chordata</taxon>
        <taxon>Craniata</taxon>
        <taxon>Vertebrata</taxon>
        <taxon>Euteleostomi</taxon>
        <taxon>Actinopterygii</taxon>
        <taxon>Neopterygii</taxon>
        <taxon>Teleostei</taxon>
        <taxon>Ostariophysi</taxon>
        <taxon>Cypriniformes</taxon>
        <taxon>Danionidae</taxon>
        <taxon>Danioninae</taxon>
        <taxon>Danio</taxon>
    </lineage>
</organism>
<name>BAF_DANRE</name>
<comment type="function">
    <text evidence="1">Non-specific DNA-binding protein that plays key roles in mitotic nuclear reassembly, chromatin organization, DNA damage response, gene expression and intrinsic immunity against foreign DNA. Contains two non-specific double-stranded DNA (dsDNA)-binding sites which promote DNA cross-bridging. Plays a key role in nuclear membrane reformation at the end of mitosis by driving formation of a single nucleus in a spindle-independent manner. Transiently cross-bridges anaphase chromosomes via its ability to bridge distant DNA sites, leading to the formation of a dense chromatin network at the chromosome ensemble surface that limits membranes to the surface. Also acts as a negative regulator of innate immune activation by restricting CGAS activity toward self-DNA upon acute loss of nuclear membrane integrity. Outcompetes CGAS for DNA-binding, thereby preventing CGAS activation and subsequent damaging autoinflammatory responses. Also involved in DNA damage response; acts by inhibiting the ADP-ribosyltransferase activity of PARP1. Involved in the recognition of exogenous dsDNA in the cytosol: associates with exogenous dsDNA immediately after its appearance in the cytosol at endosome breakdown and is required to avoid autophagy.</text>
</comment>
<comment type="subunit">
    <text evidence="1">Homodimer.</text>
</comment>
<comment type="subcellular location">
    <subcellularLocation>
        <location evidence="1">Nucleus</location>
    </subcellularLocation>
    <subcellularLocation>
        <location evidence="1">Chromosome</location>
    </subcellularLocation>
    <subcellularLocation>
        <location evidence="1">Nucleus envelope</location>
    </subcellularLocation>
    <subcellularLocation>
        <location evidence="1">Cytoplasm</location>
    </subcellularLocation>
    <text evidence="1">Significantly enriched at the nuclear inner membrane, diffusely throughout the nucleus during interphase and concentrated at the chromosomes during the M-phase.</text>
</comment>
<comment type="domain">
    <text evidence="1">Has a helix-hairpin-helix (HhH) structural motif conserved among proteins that bind non-specifically to DNA.</text>
</comment>
<comment type="similarity">
    <text evidence="3">Belongs to the BAF family.</text>
</comment>
<evidence type="ECO:0000250" key="1">
    <source>
        <dbReference type="UniProtKB" id="O75531"/>
    </source>
</evidence>
<evidence type="ECO:0000269" key="2">
    <source>
    </source>
</evidence>
<evidence type="ECO:0000305" key="3"/>
<gene>
    <name type="primary">banf1</name>
    <name type="synonym">baf</name>
    <name type="ORF">zgc:77767</name>
</gene>
<sequence length="90" mass="10228">MSSTSQKHKDFVAEPMGEKSVMALAGIGEVLGKRLEEKGFDKAYVVLGQFLVLRKDEELFREWLKDTCGANTKQQGDCYSCLREWCDSFL</sequence>
<proteinExistence type="evidence at protein level"/>